<comment type="function">
    <text evidence="1">Catalyzes the reversible reaction in which hydroxymethyl group from 5,10-methylenetetrahydrofolate is transferred onto alpha-ketoisovalerate to form ketopantoate.</text>
</comment>
<comment type="catalytic activity">
    <reaction evidence="1">
        <text>3-methyl-2-oxobutanoate + (6R)-5,10-methylene-5,6,7,8-tetrahydrofolate + H2O = 2-dehydropantoate + (6S)-5,6,7,8-tetrahydrofolate</text>
        <dbReference type="Rhea" id="RHEA:11824"/>
        <dbReference type="ChEBI" id="CHEBI:11561"/>
        <dbReference type="ChEBI" id="CHEBI:11851"/>
        <dbReference type="ChEBI" id="CHEBI:15377"/>
        <dbReference type="ChEBI" id="CHEBI:15636"/>
        <dbReference type="ChEBI" id="CHEBI:57453"/>
        <dbReference type="EC" id="2.1.2.11"/>
    </reaction>
</comment>
<comment type="cofactor">
    <cofactor evidence="1">
        <name>Mg(2+)</name>
        <dbReference type="ChEBI" id="CHEBI:18420"/>
    </cofactor>
    <text evidence="1">Binds 1 Mg(2+) ion per subunit.</text>
</comment>
<comment type="pathway">
    <text evidence="1">Cofactor biosynthesis; (R)-pantothenate biosynthesis; (R)-pantoate from 3-methyl-2-oxobutanoate: step 1/2.</text>
</comment>
<comment type="subunit">
    <text evidence="1">Homodecamer; pentamer of dimers.</text>
</comment>
<comment type="subcellular location">
    <subcellularLocation>
        <location evidence="1">Cytoplasm</location>
    </subcellularLocation>
</comment>
<comment type="similarity">
    <text evidence="1">Belongs to the PanB family.</text>
</comment>
<organism>
    <name type="scientific">Helicobacter pylori (strain Shi470)</name>
    <dbReference type="NCBI Taxonomy" id="512562"/>
    <lineage>
        <taxon>Bacteria</taxon>
        <taxon>Pseudomonadati</taxon>
        <taxon>Campylobacterota</taxon>
        <taxon>Epsilonproteobacteria</taxon>
        <taxon>Campylobacterales</taxon>
        <taxon>Helicobacteraceae</taxon>
        <taxon>Helicobacter</taxon>
    </lineage>
</organism>
<name>PANB_HELPS</name>
<feature type="chain" id="PRO_1000096974" description="3-methyl-2-oxobutanoate hydroxymethyltransferase">
    <location>
        <begin position="1"/>
        <end position="270"/>
    </location>
</feature>
<feature type="active site" description="Proton acceptor" evidence="1">
    <location>
        <position position="187"/>
    </location>
</feature>
<feature type="binding site" evidence="1">
    <location>
        <begin position="50"/>
        <end position="51"/>
    </location>
    <ligand>
        <name>3-methyl-2-oxobutanoate</name>
        <dbReference type="ChEBI" id="CHEBI:11851"/>
    </ligand>
</feature>
<feature type="binding site" evidence="1">
    <location>
        <position position="50"/>
    </location>
    <ligand>
        <name>Mg(2+)</name>
        <dbReference type="ChEBI" id="CHEBI:18420"/>
    </ligand>
</feature>
<feature type="binding site" evidence="1">
    <location>
        <position position="89"/>
    </location>
    <ligand>
        <name>3-methyl-2-oxobutanoate</name>
        <dbReference type="ChEBI" id="CHEBI:11851"/>
    </ligand>
</feature>
<feature type="binding site" evidence="1">
    <location>
        <position position="89"/>
    </location>
    <ligand>
        <name>Mg(2+)</name>
        <dbReference type="ChEBI" id="CHEBI:18420"/>
    </ligand>
</feature>
<feature type="binding site" evidence="1">
    <location>
        <position position="118"/>
    </location>
    <ligand>
        <name>3-methyl-2-oxobutanoate</name>
        <dbReference type="ChEBI" id="CHEBI:11851"/>
    </ligand>
</feature>
<feature type="binding site" evidence="1">
    <location>
        <position position="120"/>
    </location>
    <ligand>
        <name>Mg(2+)</name>
        <dbReference type="ChEBI" id="CHEBI:18420"/>
    </ligand>
</feature>
<accession>B2USM4</accession>
<protein>
    <recommendedName>
        <fullName evidence="1">3-methyl-2-oxobutanoate hydroxymethyltransferase</fullName>
        <ecNumber evidence="1">2.1.2.11</ecNumber>
    </recommendedName>
    <alternativeName>
        <fullName evidence="1">Ketopantoate hydroxymethyltransferase</fullName>
        <shortName evidence="1">KPHMT</shortName>
    </alternativeName>
</protein>
<keyword id="KW-0963">Cytoplasm</keyword>
<keyword id="KW-0460">Magnesium</keyword>
<keyword id="KW-0479">Metal-binding</keyword>
<keyword id="KW-0566">Pantothenate biosynthesis</keyword>
<keyword id="KW-0808">Transferase</keyword>
<sequence length="270" mass="29819">MSMQTAPIKKITLNHLQAKKNQEKIIAITAYDALFAQIFDPLVDVILVGDSLNMSFFNQNDTLNASVGMMLYHTKAVCAGAKIPFIITDMPFGSYKDEKTALKNAIRVYKETQASAIKLEGGKEKAKLVKTLTDEGVIVVGHIGLMPQFVRLDGGYKIKGKNEEQQKKLLEDALSLEEAGAGLLVLEGITTPIAQKITQTIKIPTIGIGSGKDCDGQILVWSDMLGFFDSFKPKFVREYLKGKELVQNAIKQYADDVKKGNFPNELESYH</sequence>
<reference key="1">
    <citation type="submission" date="2008-05" db="EMBL/GenBank/DDBJ databases">
        <title>Genome sequence of Helicobacter pylori from the remote Amazon: traces of Asian ancestry of the first Americans.</title>
        <authorList>
            <person name="Kersulyte D."/>
            <person name="Kalia A."/>
            <person name="Gilman R.H."/>
            <person name="Berg D.E."/>
        </authorList>
    </citation>
    <scope>NUCLEOTIDE SEQUENCE [LARGE SCALE GENOMIC DNA]</scope>
    <source>
        <strain>Shi470</strain>
    </source>
</reference>
<dbReference type="EC" id="2.1.2.11" evidence="1"/>
<dbReference type="EMBL" id="CP001072">
    <property type="protein sequence ID" value="ACD47856.1"/>
    <property type="molecule type" value="Genomic_DNA"/>
</dbReference>
<dbReference type="RefSeq" id="WP_000062663.1">
    <property type="nucleotide sequence ID" value="NC_010698.2"/>
</dbReference>
<dbReference type="SMR" id="B2USM4"/>
<dbReference type="KEGG" id="hps:HPSH_02030"/>
<dbReference type="HOGENOM" id="CLU_036645_1_0_7"/>
<dbReference type="UniPathway" id="UPA00028">
    <property type="reaction ID" value="UER00003"/>
</dbReference>
<dbReference type="GO" id="GO:0005737">
    <property type="term" value="C:cytoplasm"/>
    <property type="evidence" value="ECO:0007669"/>
    <property type="project" value="UniProtKB-SubCell"/>
</dbReference>
<dbReference type="GO" id="GO:0003864">
    <property type="term" value="F:3-methyl-2-oxobutanoate hydroxymethyltransferase activity"/>
    <property type="evidence" value="ECO:0007669"/>
    <property type="project" value="UniProtKB-UniRule"/>
</dbReference>
<dbReference type="GO" id="GO:0000287">
    <property type="term" value="F:magnesium ion binding"/>
    <property type="evidence" value="ECO:0007669"/>
    <property type="project" value="TreeGrafter"/>
</dbReference>
<dbReference type="GO" id="GO:0015940">
    <property type="term" value="P:pantothenate biosynthetic process"/>
    <property type="evidence" value="ECO:0007669"/>
    <property type="project" value="UniProtKB-UniRule"/>
</dbReference>
<dbReference type="CDD" id="cd06557">
    <property type="entry name" value="KPHMT-like"/>
    <property type="match status" value="1"/>
</dbReference>
<dbReference type="FunFam" id="3.20.20.60:FF:000041">
    <property type="entry name" value="3-methyl-2-oxobutanoate hydroxymethyltransferase"/>
    <property type="match status" value="1"/>
</dbReference>
<dbReference type="Gene3D" id="3.20.20.60">
    <property type="entry name" value="Phosphoenolpyruvate-binding domains"/>
    <property type="match status" value="1"/>
</dbReference>
<dbReference type="HAMAP" id="MF_00156">
    <property type="entry name" value="PanB"/>
    <property type="match status" value="1"/>
</dbReference>
<dbReference type="InterPro" id="IPR003700">
    <property type="entry name" value="Pantoate_hydroxy_MeTrfase"/>
</dbReference>
<dbReference type="InterPro" id="IPR015813">
    <property type="entry name" value="Pyrv/PenolPyrv_kinase-like_dom"/>
</dbReference>
<dbReference type="InterPro" id="IPR040442">
    <property type="entry name" value="Pyrv_kinase-like_dom_sf"/>
</dbReference>
<dbReference type="NCBIfam" id="TIGR00222">
    <property type="entry name" value="panB"/>
    <property type="match status" value="1"/>
</dbReference>
<dbReference type="NCBIfam" id="NF001452">
    <property type="entry name" value="PRK00311.1"/>
    <property type="match status" value="1"/>
</dbReference>
<dbReference type="PANTHER" id="PTHR20881">
    <property type="entry name" value="3-METHYL-2-OXOBUTANOATE HYDROXYMETHYLTRANSFERASE"/>
    <property type="match status" value="1"/>
</dbReference>
<dbReference type="PANTHER" id="PTHR20881:SF0">
    <property type="entry name" value="3-METHYL-2-OXOBUTANOATE HYDROXYMETHYLTRANSFERASE"/>
    <property type="match status" value="1"/>
</dbReference>
<dbReference type="Pfam" id="PF02548">
    <property type="entry name" value="Pantoate_transf"/>
    <property type="match status" value="1"/>
</dbReference>
<dbReference type="PIRSF" id="PIRSF000388">
    <property type="entry name" value="Pantoate_hydroxy_MeTrfase"/>
    <property type="match status" value="1"/>
</dbReference>
<dbReference type="SUPFAM" id="SSF51621">
    <property type="entry name" value="Phosphoenolpyruvate/pyruvate domain"/>
    <property type="match status" value="1"/>
</dbReference>
<evidence type="ECO:0000255" key="1">
    <source>
        <dbReference type="HAMAP-Rule" id="MF_00156"/>
    </source>
</evidence>
<gene>
    <name evidence="1" type="primary">panB</name>
    <name type="ordered locus">HPSH_02030</name>
</gene>
<proteinExistence type="inferred from homology"/>